<accession>Q9NVJ2</accession>
<accession>B4DI85</accession>
<proteinExistence type="evidence at protein level"/>
<evidence type="ECO:0000250" key="1">
    <source>
        <dbReference type="UniProtKB" id="P62330"/>
    </source>
</evidence>
<evidence type="ECO:0000250" key="2">
    <source>
        <dbReference type="UniProtKB" id="Q9CQW2"/>
    </source>
</evidence>
<evidence type="ECO:0000269" key="3">
    <source>
    </source>
</evidence>
<evidence type="ECO:0000269" key="4">
    <source>
    </source>
</evidence>
<evidence type="ECO:0000269" key="5">
    <source>
    </source>
</evidence>
<evidence type="ECO:0000269" key="6">
    <source>
    </source>
</evidence>
<evidence type="ECO:0000269" key="7">
    <source>
    </source>
</evidence>
<evidence type="ECO:0000269" key="8">
    <source>
    </source>
</evidence>
<evidence type="ECO:0000269" key="9">
    <source>
    </source>
</evidence>
<evidence type="ECO:0000269" key="10">
    <source>
    </source>
</evidence>
<evidence type="ECO:0000269" key="11">
    <source>
    </source>
</evidence>
<evidence type="ECO:0000269" key="12">
    <source>
    </source>
</evidence>
<evidence type="ECO:0000269" key="13">
    <source>
    </source>
</evidence>
<evidence type="ECO:0000269" key="14">
    <source>
    </source>
</evidence>
<evidence type="ECO:0000269" key="15">
    <source>
    </source>
</evidence>
<evidence type="ECO:0000269" key="16">
    <source>
    </source>
</evidence>
<evidence type="ECO:0000269" key="17">
    <source ref="26"/>
</evidence>
<evidence type="ECO:0000303" key="18">
    <source>
    </source>
</evidence>
<evidence type="ECO:0000305" key="19"/>
<evidence type="ECO:0000312" key="20">
    <source>
        <dbReference type="HGNC" id="HGNC:25564"/>
    </source>
</evidence>
<evidence type="ECO:0007744" key="21">
    <source>
    </source>
</evidence>
<evidence type="ECO:0007744" key="22">
    <source>
    </source>
</evidence>
<evidence type="ECO:0007829" key="23">
    <source>
        <dbReference type="PDB" id="2AL7"/>
    </source>
</evidence>
<protein>
    <recommendedName>
        <fullName evidence="19">ADP-ribosylation factor-like protein 8B</fullName>
        <ecNumber evidence="3 4">3.6.5.2</ecNumber>
    </recommendedName>
    <alternativeName>
        <fullName>ADP-ribosylation factor-like protein 10C</fullName>
    </alternativeName>
    <alternativeName>
        <fullName>Novel small G protein indispensable for equal chromosome segregation 1</fullName>
    </alternativeName>
</protein>
<name>ARL8B_HUMAN</name>
<gene>
    <name evidence="20" type="primary">ARL8B</name>
    <name type="synonym">ARL10C</name>
    <name type="synonym">GIE1</name>
</gene>
<organism>
    <name type="scientific">Homo sapiens</name>
    <name type="common">Human</name>
    <dbReference type="NCBI Taxonomy" id="9606"/>
    <lineage>
        <taxon>Eukaryota</taxon>
        <taxon>Metazoa</taxon>
        <taxon>Chordata</taxon>
        <taxon>Craniata</taxon>
        <taxon>Vertebrata</taxon>
        <taxon>Euteleostomi</taxon>
        <taxon>Mammalia</taxon>
        <taxon>Eutheria</taxon>
        <taxon>Euarchontoglires</taxon>
        <taxon>Primates</taxon>
        <taxon>Haplorrhini</taxon>
        <taxon>Catarrhini</taxon>
        <taxon>Hominidae</taxon>
        <taxon>Homo</taxon>
    </lineage>
</organism>
<comment type="function">
    <text evidence="2 3 4 5 6 7 8 9 10 11 12 13 16">Small GTPase which cycles between active GTP-bound and inactive GDP-bound states (PubMed:15331635, PubMed:16537643). In its active state, binds to a variety of effector proteins playing a key role in the regulation of lysosomal positioning which is important for nutrient sensing, natural killer cell-mediated cytotoxicity and antigen presentation. Along with its effectors, orchestrates lysosomal transport and fusion (PubMed:16537643, PubMed:16650381, PubMed:25898167, PubMed:27808481, PubMed:28325809). Localizes specifically to lysosomal membranes and mediates anterograde lysosomal motility by recruiting PLEKHM2, which in turn recruits the motor protein kinesin-1 on lysosomes. Required for lysosomal and cytolytic granule exocytosis (PubMed:22172677, PubMed:24088571, PubMed:29592961). Critical factor involved in NK cell-mediated cytotoxicity. Drives the polarization of cytolytic granules and microtubule-organizing centers (MTOCs) toward the immune synapse between effector NK lymphocytes and target cells (PubMed:24088571). In neurons, mediates the anterograde axonal long-range transport of presynaptic lysosome-related vesicles required for presynaptic biogenesis and synaptic function (By similarity). Also acts as a regulator of endosome to lysosome trafficking pathways of special significance for host defense (PubMed:21802320). Recruits RUFY1 onto early endosomes regulating endosomes to trans-Golgi network proteins retrieval (PubMed:36282215). Regulates cargo trafficking to lysosomes by binding to PLEKHM1 and recruiting the HOPS subunit VPS41, resulting in functional assembly of the HOPS complex on lysosomal membranes (PubMed:16537643, PubMed:25908847). Plays an important role in cargo delivery to lysosomes for antigen presentation and microbial killing. Directs the intersection of CD1d with lipid antigens in lysosomes, and plays a role in intersecting phagosomes with lysosomes to generate phagolysosomes that kill microbes (PubMed:21802320, PubMed:25908847). Involved in the process of MHC II presentation. Regulates the delivery of antigens to lysosomes and the formation of MHC II-peptide complexes through the recruitment of the HOPS complex to lysosomes allowing the fusion of late endosomes to lysosomes (By similarity). May play a role in chromosome segregation (PubMed:15331635).</text>
</comment>
<comment type="function">
    <text evidence="13">(Microbial infection) During Mycobacterium tuberculosis (Mtb) infection, is required for plasma membrane repair by controlling the exocytosis of lysosomes in macrophages. ARL8B secretion pathway is crucial to control the type of cell death of the M.tuberculosis-infected macrophages, distinguishing avirulent from virulent Mtb induced necrotic cell death.</text>
</comment>
<comment type="function">
    <text evidence="14">(Microbial infection) During infection, coronaviruses such as SARS-CoV-2 and the chaperone HSPA5/GRP78 are probably co-released through ARL8B-dependent lysosomal exocytic pathway for unconventional egress.</text>
</comment>
<comment type="catalytic activity">
    <reaction evidence="3 4">
        <text>GTP + H2O = GDP + phosphate + H(+)</text>
        <dbReference type="Rhea" id="RHEA:19669"/>
        <dbReference type="ChEBI" id="CHEBI:15377"/>
        <dbReference type="ChEBI" id="CHEBI:15378"/>
        <dbReference type="ChEBI" id="CHEBI:37565"/>
        <dbReference type="ChEBI" id="CHEBI:43474"/>
        <dbReference type="ChEBI" id="CHEBI:58189"/>
        <dbReference type="EC" id="3.6.5.2"/>
    </reaction>
    <physiologicalReaction direction="left-to-right" evidence="3 4">
        <dbReference type="Rhea" id="RHEA:19670"/>
    </physiologicalReaction>
</comment>
<comment type="subunit">
    <text evidence="3 6 7 9 10 12 15 16 17">Interacts with tubulin (PubMed:15331635, Ref.26). Interacts with BORCS5; recruits ARL8B to lysosomes (PubMed:25898167). Interacts with VPS41; the interaction mediates the recruitment of the HOPS complex to lysosomes (PubMed:21802320, PubMed:25908847). Interacts (GTP-bound form) with PLEKHM2 (via RUN domain); the interaction is required to recruit the motor protein kinesin-1 on lysosomes (PubMed:22172677, PubMed:28325809). Interacts (GTP-bound form) with PLEKHM1 (via RUN domain); the interaction is required for PLEKHM1 localization to lysosomes and for ARL8B function in delivery and degradation of endocytic and autophagic cargo in lysosomes (PubMed:28325809). PLEKHM1 and PLEKHM2 compete for interaction with ARL8B (PubMed:28325809). Interacts (GTP-bound form) with RUFY1; the interaction is required for RUFY1 endosomal location (PubMed:36282215). When GTP-bound, interacts with RUFY3 and RUFY4, but not with RUFY1, nor RUFY2 (PubMed:35314674).</text>
</comment>
<comment type="interaction">
    <interactant intactId="EBI-718376">
        <id>Q9NVJ2</id>
    </interactant>
    <interactant intactId="EBI-7062247">
        <id>Q9UHD4</id>
        <label>CIDEB</label>
    </interactant>
    <organismsDiffer>false</organismsDiffer>
    <experiments>3</experiments>
</comment>
<comment type="interaction">
    <interactant intactId="EBI-718376">
        <id>Q9NVJ2</id>
    </interactant>
    <interactant intactId="EBI-473814">
        <id>Q9Y4G2</id>
        <label>PLEKHM1</label>
    </interactant>
    <organismsDiffer>false</organismsDiffer>
    <experiments>20</experiments>
</comment>
<comment type="interaction">
    <interactant intactId="EBI-718376">
        <id>Q9NVJ2</id>
    </interactant>
    <interactant intactId="EBI-10262251">
        <id>Q8IWU4</id>
        <label>SLC30A8</label>
    </interactant>
    <organismsDiffer>false</organismsDiffer>
    <experiments>3</experiments>
</comment>
<comment type="interaction">
    <interactant intactId="EBI-718376">
        <id>Q9NVJ2</id>
    </interactant>
    <interactant intactId="EBI-632715">
        <id>Q13573</id>
        <label>SNW1</label>
    </interactant>
    <organismsDiffer>false</organismsDiffer>
    <experiments>5</experiments>
</comment>
<comment type="interaction">
    <interactant intactId="EBI-718376">
        <id>Q9NVJ2</id>
    </interactant>
    <interactant intactId="EBI-8638294">
        <id>Q9NUH8</id>
        <label>TMEM14B</label>
    </interactant>
    <organismsDiffer>false</organismsDiffer>
    <experiments>3</experiments>
</comment>
<comment type="subcellular location">
    <subcellularLocation>
        <location evidence="4">Late endosome membrane</location>
    </subcellularLocation>
    <subcellularLocation>
        <location evidence="5 6 7 9 11 12 13">Lysosome membrane</location>
    </subcellularLocation>
    <subcellularLocation>
        <location evidence="3">Cytoplasm</location>
        <location evidence="3">Cytoskeleton</location>
        <location evidence="3">Spindle</location>
    </subcellularLocation>
    <subcellularLocation>
        <location evidence="2">Cell projection</location>
        <location evidence="2">Axon</location>
    </subcellularLocation>
    <subcellularLocation>
        <location evidence="2">Synapse</location>
    </subcellularLocation>
    <subcellularLocation>
        <location evidence="8">Cytolytic granule membrane</location>
    </subcellularLocation>
    <subcellularLocation>
        <location evidence="16">Early endosome membrane</location>
    </subcellularLocation>
    <text evidence="2 3 5">GTP-bound form resides on lysosomal membranes, whereas GDP-bound form is likely associated with microtubular structures (PubMed:16650381). Localizes with microtubules at the spindle mid-zone during mitosis. In dendritic cells, localizes to MHC II+ compartments (By similarity).</text>
</comment>
<comment type="alternative products">
    <event type="alternative splicing"/>
    <isoform>
        <id>Q9NVJ2-1</id>
        <name>1</name>
        <sequence type="displayed"/>
    </isoform>
    <isoform>
        <id>Q9NVJ2-2</id>
        <name>2</name>
        <sequence type="described" ref="VSP_056238"/>
    </isoform>
</comment>
<comment type="tissue specificity">
    <text evidence="3">Ubiquitously expressed.</text>
</comment>
<comment type="PTM">
    <text evidence="11">Ubiquitinated at Lys-141 by RNF167, leading to its degradation.</text>
</comment>
<comment type="similarity">
    <text evidence="19">Belongs to the small GTPase superfamily. Arf family.</text>
</comment>
<keyword id="KW-0002">3D-structure</keyword>
<keyword id="KW-0007">Acetylation</keyword>
<keyword id="KW-0025">Alternative splicing</keyword>
<keyword id="KW-0131">Cell cycle</keyword>
<keyword id="KW-0132">Cell division</keyword>
<keyword id="KW-0966">Cell projection</keyword>
<keyword id="KW-0963">Cytoplasm</keyword>
<keyword id="KW-0206">Cytoskeleton</keyword>
<keyword id="KW-0903">Direct protein sequencing</keyword>
<keyword id="KW-0967">Endosome</keyword>
<keyword id="KW-0342">GTP-binding</keyword>
<keyword id="KW-0378">Hydrolase</keyword>
<keyword id="KW-1017">Isopeptide bond</keyword>
<keyword id="KW-0458">Lysosome</keyword>
<keyword id="KW-0472">Membrane</keyword>
<keyword id="KW-0547">Nucleotide-binding</keyword>
<keyword id="KW-0653">Protein transport</keyword>
<keyword id="KW-1267">Proteomics identification</keyword>
<keyword id="KW-1185">Reference proteome</keyword>
<keyword id="KW-0770">Synapse</keyword>
<keyword id="KW-0813">Transport</keyword>
<keyword id="KW-0832">Ubl conjugation</keyword>
<reference key="1">
    <citation type="journal article" date="2004" name="J. Cell Sci.">
        <title>Novel small GTPase subfamily capable of associating with tubulin is required for chromosome segregation.</title>
        <authorList>
            <person name="Okai T."/>
            <person name="Araki Y."/>
            <person name="Tada M."/>
            <person name="Tateno T."/>
            <person name="Kontani K."/>
            <person name="Katada T."/>
        </authorList>
    </citation>
    <scope>NUCLEOTIDE SEQUENCE [MRNA] (ISOFORM 1)</scope>
    <scope>FUNCTION</scope>
    <scope>TISSUE SPECIFICITY</scope>
    <scope>MUTAGENESIS OF THR-34; 49-MET--ARG-58; TRP-70; 74-GLY--TYR-85 AND ASN-130</scope>
    <scope>SUBCELLULAR LOCATION</scope>
    <scope>INTERACTION WITH TUBULIN</scope>
    <scope>CATALYTIC ACTIVITY</scope>
    <source>
        <tissue>Brain</tissue>
    </source>
</reference>
<reference key="2">
    <citation type="journal article" date="2004" name="Nat. Genet.">
        <title>Complete sequencing and characterization of 21,243 full-length human cDNAs.</title>
        <authorList>
            <person name="Ota T."/>
            <person name="Suzuki Y."/>
            <person name="Nishikawa T."/>
            <person name="Otsuki T."/>
            <person name="Sugiyama T."/>
            <person name="Irie R."/>
            <person name="Wakamatsu A."/>
            <person name="Hayashi K."/>
            <person name="Sato H."/>
            <person name="Nagai K."/>
            <person name="Kimura K."/>
            <person name="Makita H."/>
            <person name="Sekine M."/>
            <person name="Obayashi M."/>
            <person name="Nishi T."/>
            <person name="Shibahara T."/>
            <person name="Tanaka T."/>
            <person name="Ishii S."/>
            <person name="Yamamoto J."/>
            <person name="Saito K."/>
            <person name="Kawai Y."/>
            <person name="Isono Y."/>
            <person name="Nakamura Y."/>
            <person name="Nagahari K."/>
            <person name="Murakami K."/>
            <person name="Yasuda T."/>
            <person name="Iwayanagi T."/>
            <person name="Wagatsuma M."/>
            <person name="Shiratori A."/>
            <person name="Sudo H."/>
            <person name="Hosoiri T."/>
            <person name="Kaku Y."/>
            <person name="Kodaira H."/>
            <person name="Kondo H."/>
            <person name="Sugawara M."/>
            <person name="Takahashi M."/>
            <person name="Kanda K."/>
            <person name="Yokoi T."/>
            <person name="Furuya T."/>
            <person name="Kikkawa E."/>
            <person name="Omura Y."/>
            <person name="Abe K."/>
            <person name="Kamihara K."/>
            <person name="Katsuta N."/>
            <person name="Sato K."/>
            <person name="Tanikawa M."/>
            <person name="Yamazaki M."/>
            <person name="Ninomiya K."/>
            <person name="Ishibashi T."/>
            <person name="Yamashita H."/>
            <person name="Murakawa K."/>
            <person name="Fujimori K."/>
            <person name="Tanai H."/>
            <person name="Kimata M."/>
            <person name="Watanabe M."/>
            <person name="Hiraoka S."/>
            <person name="Chiba Y."/>
            <person name="Ishida S."/>
            <person name="Ono Y."/>
            <person name="Takiguchi S."/>
            <person name="Watanabe S."/>
            <person name="Yosida M."/>
            <person name="Hotuta T."/>
            <person name="Kusano J."/>
            <person name="Kanehori K."/>
            <person name="Takahashi-Fujii A."/>
            <person name="Hara H."/>
            <person name="Tanase T.-O."/>
            <person name="Nomura Y."/>
            <person name="Togiya S."/>
            <person name="Komai F."/>
            <person name="Hara R."/>
            <person name="Takeuchi K."/>
            <person name="Arita M."/>
            <person name="Imose N."/>
            <person name="Musashino K."/>
            <person name="Yuuki H."/>
            <person name="Oshima A."/>
            <person name="Sasaki N."/>
            <person name="Aotsuka S."/>
            <person name="Yoshikawa Y."/>
            <person name="Matsunawa H."/>
            <person name="Ichihara T."/>
            <person name="Shiohata N."/>
            <person name="Sano S."/>
            <person name="Moriya S."/>
            <person name="Momiyama H."/>
            <person name="Satoh N."/>
            <person name="Takami S."/>
            <person name="Terashima Y."/>
            <person name="Suzuki O."/>
            <person name="Nakagawa S."/>
            <person name="Senoh A."/>
            <person name="Mizoguchi H."/>
            <person name="Goto Y."/>
            <person name="Shimizu F."/>
            <person name="Wakebe H."/>
            <person name="Hishigaki H."/>
            <person name="Watanabe T."/>
            <person name="Sugiyama A."/>
            <person name="Takemoto M."/>
            <person name="Kawakami B."/>
            <person name="Yamazaki M."/>
            <person name="Watanabe K."/>
            <person name="Kumagai A."/>
            <person name="Itakura S."/>
            <person name="Fukuzumi Y."/>
            <person name="Fujimori Y."/>
            <person name="Komiyama M."/>
            <person name="Tashiro H."/>
            <person name="Tanigami A."/>
            <person name="Fujiwara T."/>
            <person name="Ono T."/>
            <person name="Yamada K."/>
            <person name="Fujii Y."/>
            <person name="Ozaki K."/>
            <person name="Hirao M."/>
            <person name="Ohmori Y."/>
            <person name="Kawabata A."/>
            <person name="Hikiji T."/>
            <person name="Kobatake N."/>
            <person name="Inagaki H."/>
            <person name="Ikema Y."/>
            <person name="Okamoto S."/>
            <person name="Okitani R."/>
            <person name="Kawakami T."/>
            <person name="Noguchi S."/>
            <person name="Itoh T."/>
            <person name="Shigeta K."/>
            <person name="Senba T."/>
            <person name="Matsumura K."/>
            <person name="Nakajima Y."/>
            <person name="Mizuno T."/>
            <person name="Morinaga M."/>
            <person name="Sasaki M."/>
            <person name="Togashi T."/>
            <person name="Oyama M."/>
            <person name="Hata H."/>
            <person name="Watanabe M."/>
            <person name="Komatsu T."/>
            <person name="Mizushima-Sugano J."/>
            <person name="Satoh T."/>
            <person name="Shirai Y."/>
            <person name="Takahashi Y."/>
            <person name="Nakagawa K."/>
            <person name="Okumura K."/>
            <person name="Nagase T."/>
            <person name="Nomura N."/>
            <person name="Kikuchi H."/>
            <person name="Masuho Y."/>
            <person name="Yamashita R."/>
            <person name="Nakai K."/>
            <person name="Yada T."/>
            <person name="Nakamura Y."/>
            <person name="Ohara O."/>
            <person name="Isogai T."/>
            <person name="Sugano S."/>
        </authorList>
    </citation>
    <scope>NUCLEOTIDE SEQUENCE [LARGE SCALE MRNA] (ISOFORMS 1 AND 2)</scope>
    <source>
        <tissue>Hippocampus</tissue>
        <tissue>Teratocarcinoma</tissue>
    </source>
</reference>
<reference key="3">
    <citation type="submission" date="2004-06" db="EMBL/GenBank/DDBJ databases">
        <title>Cloning of human full open reading frames in Gateway(TM) system entry vector (pDONR201).</title>
        <authorList>
            <person name="Ebert L."/>
            <person name="Schick M."/>
            <person name="Neubert P."/>
            <person name="Schatten R."/>
            <person name="Henze S."/>
            <person name="Korn B."/>
        </authorList>
    </citation>
    <scope>NUCLEOTIDE SEQUENCE [LARGE SCALE MRNA] (ISOFORM 1)</scope>
</reference>
<reference key="4">
    <citation type="journal article" date="2006" name="Nature">
        <title>The DNA sequence, annotation and analysis of human chromosome 3.</title>
        <authorList>
            <person name="Muzny D.M."/>
            <person name="Scherer S.E."/>
            <person name="Kaul R."/>
            <person name="Wang J."/>
            <person name="Yu J."/>
            <person name="Sudbrak R."/>
            <person name="Buhay C.J."/>
            <person name="Chen R."/>
            <person name="Cree A."/>
            <person name="Ding Y."/>
            <person name="Dugan-Rocha S."/>
            <person name="Gill R."/>
            <person name="Gunaratne P."/>
            <person name="Harris R.A."/>
            <person name="Hawes A.C."/>
            <person name="Hernandez J."/>
            <person name="Hodgson A.V."/>
            <person name="Hume J."/>
            <person name="Jackson A."/>
            <person name="Khan Z.M."/>
            <person name="Kovar-Smith C."/>
            <person name="Lewis L.R."/>
            <person name="Lozado R.J."/>
            <person name="Metzker M.L."/>
            <person name="Milosavljevic A."/>
            <person name="Miner G.R."/>
            <person name="Morgan M.B."/>
            <person name="Nazareth L.V."/>
            <person name="Scott G."/>
            <person name="Sodergren E."/>
            <person name="Song X.-Z."/>
            <person name="Steffen D."/>
            <person name="Wei S."/>
            <person name="Wheeler D.A."/>
            <person name="Wright M.W."/>
            <person name="Worley K.C."/>
            <person name="Yuan Y."/>
            <person name="Zhang Z."/>
            <person name="Adams C.Q."/>
            <person name="Ansari-Lari M.A."/>
            <person name="Ayele M."/>
            <person name="Brown M.J."/>
            <person name="Chen G."/>
            <person name="Chen Z."/>
            <person name="Clendenning J."/>
            <person name="Clerc-Blankenburg K.P."/>
            <person name="Chen R."/>
            <person name="Chen Z."/>
            <person name="Davis C."/>
            <person name="Delgado O."/>
            <person name="Dinh H.H."/>
            <person name="Dong W."/>
            <person name="Draper H."/>
            <person name="Ernst S."/>
            <person name="Fu G."/>
            <person name="Gonzalez-Garay M.L."/>
            <person name="Garcia D.K."/>
            <person name="Gillett W."/>
            <person name="Gu J."/>
            <person name="Hao B."/>
            <person name="Haugen E."/>
            <person name="Havlak P."/>
            <person name="He X."/>
            <person name="Hennig S."/>
            <person name="Hu S."/>
            <person name="Huang W."/>
            <person name="Jackson L.R."/>
            <person name="Jacob L.S."/>
            <person name="Kelly S.H."/>
            <person name="Kube M."/>
            <person name="Levy R."/>
            <person name="Li Z."/>
            <person name="Liu B."/>
            <person name="Liu J."/>
            <person name="Liu W."/>
            <person name="Lu J."/>
            <person name="Maheshwari M."/>
            <person name="Nguyen B.-V."/>
            <person name="Okwuonu G.O."/>
            <person name="Palmeiri A."/>
            <person name="Pasternak S."/>
            <person name="Perez L.M."/>
            <person name="Phelps K.A."/>
            <person name="Plopper F.J."/>
            <person name="Qiang B."/>
            <person name="Raymond C."/>
            <person name="Rodriguez R."/>
            <person name="Saenphimmachak C."/>
            <person name="Santibanez J."/>
            <person name="Shen H."/>
            <person name="Shen Y."/>
            <person name="Subramanian S."/>
            <person name="Tabor P.E."/>
            <person name="Verduzco D."/>
            <person name="Waldron L."/>
            <person name="Wang J."/>
            <person name="Wang J."/>
            <person name="Wang Q."/>
            <person name="Williams G.A."/>
            <person name="Wong G.K.-S."/>
            <person name="Yao Z."/>
            <person name="Zhang J."/>
            <person name="Zhang X."/>
            <person name="Zhao G."/>
            <person name="Zhou J."/>
            <person name="Zhou Y."/>
            <person name="Nelson D."/>
            <person name="Lehrach H."/>
            <person name="Reinhardt R."/>
            <person name="Naylor S.L."/>
            <person name="Yang H."/>
            <person name="Olson M."/>
            <person name="Weinstock G."/>
            <person name="Gibbs R.A."/>
        </authorList>
    </citation>
    <scope>NUCLEOTIDE SEQUENCE [LARGE SCALE GENOMIC DNA]</scope>
</reference>
<reference key="5">
    <citation type="submission" date="2005-07" db="EMBL/GenBank/DDBJ databases">
        <authorList>
            <person name="Mural R.J."/>
            <person name="Istrail S."/>
            <person name="Sutton G."/>
            <person name="Florea L."/>
            <person name="Halpern A.L."/>
            <person name="Mobarry C.M."/>
            <person name="Lippert R."/>
            <person name="Walenz B."/>
            <person name="Shatkay H."/>
            <person name="Dew I."/>
            <person name="Miller J.R."/>
            <person name="Flanigan M.J."/>
            <person name="Edwards N.J."/>
            <person name="Bolanos R."/>
            <person name="Fasulo D."/>
            <person name="Halldorsson B.V."/>
            <person name="Hannenhalli S."/>
            <person name="Turner R."/>
            <person name="Yooseph S."/>
            <person name="Lu F."/>
            <person name="Nusskern D.R."/>
            <person name="Shue B.C."/>
            <person name="Zheng X.H."/>
            <person name="Zhong F."/>
            <person name="Delcher A.L."/>
            <person name="Huson D.H."/>
            <person name="Kravitz S.A."/>
            <person name="Mouchard L."/>
            <person name="Reinert K."/>
            <person name="Remington K.A."/>
            <person name="Clark A.G."/>
            <person name="Waterman M.S."/>
            <person name="Eichler E.E."/>
            <person name="Adams M.D."/>
            <person name="Hunkapiller M.W."/>
            <person name="Myers E.W."/>
            <person name="Venter J.C."/>
        </authorList>
    </citation>
    <scope>NUCLEOTIDE SEQUENCE [LARGE SCALE GENOMIC DNA]</scope>
</reference>
<reference key="6">
    <citation type="journal article" date="2004" name="Genome Res.">
        <title>The status, quality, and expansion of the NIH full-length cDNA project: the Mammalian Gene Collection (MGC).</title>
        <authorList>
            <consortium name="The MGC Project Team"/>
        </authorList>
    </citation>
    <scope>NUCLEOTIDE SEQUENCE [LARGE SCALE MRNA] (ISOFORM 1)</scope>
    <source>
        <tissue>Embryonic carcinoma</tissue>
        <tissue>Testis</tissue>
    </source>
</reference>
<reference key="7">
    <citation type="submission" date="2005-06" db="UniProtKB">
        <authorList>
            <person name="Bienvenut W.V."/>
        </authorList>
    </citation>
    <scope>PROTEIN SEQUENCE OF 69-77; 147-155 AND 166-182</scope>
    <scope>IDENTIFICATION BY MASS SPECTROMETRY</scope>
    <source>
        <tissue>B-cell lymphoma</tissue>
    </source>
</reference>
<reference key="8">
    <citation type="journal article" date="2006" name="Biochem. Biophys. Res. Commun.">
        <title>The Arf-family protein, Arl8b, is involved in the spatial distribution of lysosomes.</title>
        <authorList>
            <person name="Bagshaw R.D."/>
            <person name="Callahan J.W."/>
            <person name="Mahuran D.J."/>
        </authorList>
    </citation>
    <scope>FUNCTION</scope>
    <scope>SUBCELLULAR LOCATION</scope>
    <scope>MUTAGENESIS OF THR-34 AND GLN-75</scope>
</reference>
<reference key="9">
    <citation type="journal article" date="2006" name="J. Cell Sci.">
        <title>An N-terminally acetylated Arf-like GTPase is localised to lysosomes and affects their motility.</title>
        <authorList>
            <person name="Hofmann I."/>
            <person name="Munro S."/>
        </authorList>
    </citation>
    <scope>FUNCTION</scope>
    <scope>IDENTIFICATION BY MASS SPECTROMETRY</scope>
    <scope>SUBCELLULAR LOCATION</scope>
    <scope>ACETYLATION AT MET-1</scope>
    <scope>MUTAGENESIS OF LEU-2; 5-ILE--PHE-12 AND GLN-75</scope>
    <scope>CATALYTIC ACTIVITY</scope>
</reference>
<reference key="10">
    <citation type="journal article" date="2007" name="Traffic">
        <title>Integral and associated lysosomal membrane proteins.</title>
        <authorList>
            <person name="Schroeder B."/>
            <person name="Wrocklage C."/>
            <person name="Pan C."/>
            <person name="Jaeger R."/>
            <person name="Koesters B."/>
            <person name="Schaefer H."/>
            <person name="Elsaesser H.-P."/>
            <person name="Mann M."/>
            <person name="Hasilik A."/>
        </authorList>
    </citation>
    <scope>SUBCELLULAR LOCATION [LARGE SCALE ANALYSIS]</scope>
    <source>
        <tissue>Placenta</tissue>
    </source>
</reference>
<reference key="11">
    <citation type="journal article" date="2011" name="BMC Syst. Biol.">
        <title>Initial characterization of the human central proteome.</title>
        <authorList>
            <person name="Burkard T.R."/>
            <person name="Planyavsky M."/>
            <person name="Kaupe I."/>
            <person name="Breitwieser F.P."/>
            <person name="Buerckstuemmer T."/>
            <person name="Bennett K.L."/>
            <person name="Superti-Furga G."/>
            <person name="Colinge J."/>
        </authorList>
    </citation>
    <scope>IDENTIFICATION BY MASS SPECTROMETRY [LARGE SCALE ANALYSIS]</scope>
</reference>
<reference key="12">
    <citation type="journal article" date="2011" name="Dev. Cell">
        <title>Arl8 and SKIP act together to link lysosomes to kinesin-1.</title>
        <authorList>
            <person name="Rosa-Ferreira C."/>
            <person name="Munro S."/>
        </authorList>
    </citation>
    <scope>FUNCTION</scope>
    <scope>INTERACTION WITH PLEKHM2</scope>
    <scope>SUBCELLULAR LOCATION</scope>
</reference>
<reference key="13">
    <citation type="journal article" date="2011" name="Immunity">
        <title>Lysosomal trafficking, antigen presentation, and microbial killing are controlled by the Arf-like GTPase Arl8b.</title>
        <authorList>
            <person name="Garg S."/>
            <person name="Sharma M."/>
            <person name="Ung C."/>
            <person name="Tuli A."/>
            <person name="Barral D.C."/>
            <person name="Hava D.L."/>
            <person name="Veerapen N."/>
            <person name="Besra G.S."/>
            <person name="Hacohen N."/>
            <person name="Brenner M.B."/>
        </authorList>
    </citation>
    <scope>FUNCTION</scope>
    <scope>INTERACTION WITH VPS41</scope>
    <scope>SUBCELLULAR LOCATION</scope>
    <scope>MUTAGENESIS OF THR-34 AND GLN-75</scope>
</reference>
<reference key="14">
    <citation type="journal article" date="2012" name="Mol. Cell. Proteomics">
        <title>Comparative large-scale characterisation of plant vs. mammal proteins reveals similar and idiosyncratic N-alpha acetylation features.</title>
        <authorList>
            <person name="Bienvenut W.V."/>
            <person name="Sumpton D."/>
            <person name="Martinez A."/>
            <person name="Lilla S."/>
            <person name="Espagne C."/>
            <person name="Meinnel T."/>
            <person name="Giglione C."/>
        </authorList>
    </citation>
    <scope>ACETYLATION [LARGE SCALE ANALYSIS] AT MET-1</scope>
    <scope>IDENTIFICATION BY MASS SPECTROMETRY [LARGE SCALE ANALYSIS]</scope>
</reference>
<reference key="15">
    <citation type="journal article" date="2012" name="Proc. Natl. Acad. Sci. U.S.A.">
        <title>N-terminal acetylome analyses and functional insights of the N-terminal acetyltransferase NatB.</title>
        <authorList>
            <person name="Van Damme P."/>
            <person name="Lasa M."/>
            <person name="Polevoda B."/>
            <person name="Gazquez C."/>
            <person name="Elosegui-Artola A."/>
            <person name="Kim D.S."/>
            <person name="De Juan-Pardo E."/>
            <person name="Demeyer K."/>
            <person name="Hole K."/>
            <person name="Larrea E."/>
            <person name="Timmerman E."/>
            <person name="Prieto J."/>
            <person name="Arnesen T."/>
            <person name="Sherman F."/>
            <person name="Gevaert K."/>
            <person name="Aldabe R."/>
        </authorList>
    </citation>
    <scope>ACETYLATION [LARGE SCALE ANALYSIS] AT MET-1</scope>
    <scope>IDENTIFICATION BY MASS SPECTROMETRY [LARGE SCALE ANALYSIS]</scope>
</reference>
<reference key="16">
    <citation type="journal article" date="2013" name="Mol. Biol. Cell">
        <title>Arf-like GTPase Arl8b regulates lytic granule polarization and natural killer cell-mediated cytotoxicity.</title>
        <authorList>
            <person name="Tuli A."/>
            <person name="Thiery J."/>
            <person name="James A.M."/>
            <person name="Michelet X."/>
            <person name="Sharma M."/>
            <person name="Garg S."/>
            <person name="Sanborn K.B."/>
            <person name="Orange J.S."/>
            <person name="Lieberman J."/>
            <person name="Brenner M.B."/>
        </authorList>
    </citation>
    <scope>FUNCTION</scope>
    <scope>SUBCELLULAR LOCATION</scope>
</reference>
<reference key="17">
    <citation type="journal article" date="2014" name="J. Proteomics">
        <title>An enzyme assisted RP-RPLC approach for in-depth analysis of human liver phosphoproteome.</title>
        <authorList>
            <person name="Bian Y."/>
            <person name="Song C."/>
            <person name="Cheng K."/>
            <person name="Dong M."/>
            <person name="Wang F."/>
            <person name="Huang J."/>
            <person name="Sun D."/>
            <person name="Wang L."/>
            <person name="Ye M."/>
            <person name="Zou H."/>
        </authorList>
    </citation>
    <scope>IDENTIFICATION BY MASS SPECTROMETRY [LARGE SCALE ANALYSIS]</scope>
    <source>
        <tissue>Liver</tissue>
    </source>
</reference>
<reference key="18">
    <citation type="journal article" date="2015" name="Dev. Cell">
        <title>BORC, a multisubunit complex that regulates lysosome positioning.</title>
        <authorList>
            <person name="Pu J."/>
            <person name="Schindler C."/>
            <person name="Jia R."/>
            <person name="Jarnik M."/>
            <person name="Backlund P."/>
            <person name="Bonifacino J.S."/>
        </authorList>
    </citation>
    <scope>FUNCTION</scope>
    <scope>INTERACTION WITH BORCS5</scope>
    <scope>SUBCELLULAR LOCATION</scope>
</reference>
<reference key="19">
    <citation type="journal article" date="2015" name="J. Cell Sci.">
        <title>The small GTPase Arl8b regulates assembly of the mammalian HOPS complex on lysosomes.</title>
        <authorList>
            <person name="Khatter D."/>
            <person name="Raina V.B."/>
            <person name="Dwivedi D."/>
            <person name="Sindhwani A."/>
            <person name="Bahl S."/>
            <person name="Sharma M."/>
        </authorList>
    </citation>
    <scope>FUNCTION</scope>
    <scope>INTERACTION WITH VPS41</scope>
</reference>
<reference key="20">
    <citation type="journal article" date="2015" name="Proteomics">
        <title>N-terminome analysis of the human mitochondrial proteome.</title>
        <authorList>
            <person name="Vaca Jacome A.S."/>
            <person name="Rabilloud T."/>
            <person name="Schaeffer-Reiss C."/>
            <person name="Rompais M."/>
            <person name="Ayoub D."/>
            <person name="Lane L."/>
            <person name="Bairoch A."/>
            <person name="Van Dorsselaer A."/>
            <person name="Carapito C."/>
        </authorList>
    </citation>
    <scope>IDENTIFICATION BY MASS SPECTROMETRY [LARGE SCALE ANALYSIS]</scope>
</reference>
<reference key="21">
    <citation type="journal article" date="2016" name="FEBS J.">
        <title>RNF167 targets Arl8B for degradation to regulate lysosome positioning and endocytic trafficking.</title>
        <authorList>
            <person name="Deshar R."/>
            <person name="Moon S."/>
            <person name="Yoo W."/>
            <person name="Cho E.B."/>
            <person name="Yoon S.K."/>
            <person name="Yoon J.B."/>
        </authorList>
    </citation>
    <scope>FUNCTION</scope>
    <scope>SUBCELLULAR LOCATION</scope>
    <scope>UBIQUITINATION AT LYS-141</scope>
    <scope>MUTAGENESIS OF LYS-141</scope>
</reference>
<reference key="22">
    <citation type="journal article" date="2017" name="J. Cell Biol.">
        <title>The Rab7 effector PLEKHM1 binds Arl8b to promote cargo traffic to lysosomes.</title>
        <authorList>
            <person name="Marwaha R."/>
            <person name="Arya S.B."/>
            <person name="Jagga D."/>
            <person name="Kaur H."/>
            <person name="Tuli A."/>
            <person name="Sharma M."/>
        </authorList>
    </citation>
    <scope>FUNCTION</scope>
    <scope>INTERACTION WITH PLEKHM1 AND PLEKHM2</scope>
    <scope>SUBCELLULAR LOCATION</scope>
    <scope>MUTAGENESIS OF THR-34 AND GLN-75</scope>
</reference>
<reference key="23">
    <citation type="journal article" date="2018" name="J. Immunol.">
        <title>Lysosome-Mediated Plasma Membrane Repair Is Dependent on the Small GTPase Arl8b and Determines Cell Death Type in Mycobacterium tuberculosis Infection.</title>
        <authorList>
            <person name="Michelet X."/>
            <person name="Tuli A."/>
            <person name="Gan H."/>
            <person name="Geadas C."/>
            <person name="Sharma M."/>
            <person name="Remold H.G."/>
            <person name="Brenner M.B."/>
        </authorList>
    </citation>
    <scope>FUNCTION (MICROBIAL INFECTION)</scope>
    <scope>FUNCTION</scope>
    <scope>SUBCELLULAR LOCATION</scope>
</reference>
<reference key="24">
    <citation type="journal article" date="2020" name="Cell">
        <title>beta-Coronaviruses Use Lysosomes for Egress Instead of the Biosynthetic Secretory Pathway.</title>
        <authorList>
            <person name="Ghosh S."/>
            <person name="Dellibovi-Ragheb T.A."/>
            <person name="Kerviel A."/>
            <person name="Pak E."/>
            <person name="Qiu Q."/>
            <person name="Fisher M."/>
            <person name="Takvorian P.M."/>
            <person name="Bleck C."/>
            <person name="Hsu V.W."/>
            <person name="Fehr A.R."/>
            <person name="Perlman S."/>
            <person name="Achar S.R."/>
            <person name="Straus M.R."/>
            <person name="Whittaker G.R."/>
            <person name="de Haan C.A.M."/>
            <person name="Kehrl J."/>
            <person name="Altan-Bonnet G."/>
            <person name="Altan-Bonnet N."/>
        </authorList>
    </citation>
    <scope>FUNCTION (MICROBIAL INFECTION)</scope>
</reference>
<reference key="25">
    <citation type="journal article" date="2023" name="J. Cell Biol.">
        <title>RUFY1 binds Arl8b and mediates endosome-to-TGN CI-M6PR retrieval for cargo sorting to lysosomes.</title>
        <authorList>
            <person name="Rawat S."/>
            <person name="Chatterjee D."/>
            <person name="Marwaha R."/>
            <person name="Charak G."/>
            <person name="Kumar G."/>
            <person name="Shaw S."/>
            <person name="Khatter D."/>
            <person name="Sharma S."/>
            <person name="de Heus C."/>
            <person name="Liv N."/>
            <person name="Klumperman J."/>
            <person name="Tuli A."/>
            <person name="Sharma M."/>
        </authorList>
    </citation>
    <scope>FUNCTION</scope>
    <scope>SUBCELLULAR LOCATION</scope>
    <scope>INTERACTION WITH RUFY1</scope>
</reference>
<reference key="26">
    <citation type="submission" date="2005-08" db="PDB data bank">
        <title>GTP-like conformation of GDP-bound ARL10C GTPase.</title>
        <authorList>
            <consortium name="Structural genomics consortium (SGC)"/>
        </authorList>
    </citation>
    <scope>X-RAY CRYSTALLOGRAPHY (1.85 ANGSTROMS) OF 18-184 IN COMPLEX WITH GDP</scope>
</reference>
<reference key="27">
    <citation type="journal article" date="2022" name="Nat. Commun.">
        <title>RUFY3 and RUFY4 are ARL8 effectors that promote coupling of endolysosomes to dynein-dynactin.</title>
        <authorList>
            <person name="Keren-Kaplan T."/>
            <person name="Saric A."/>
            <person name="Ghosh S."/>
            <person name="Williamson C.D."/>
            <person name="Jia R."/>
            <person name="Li Y."/>
            <person name="Bonifacino J.S."/>
        </authorList>
    </citation>
    <scope>INTERACTION WITH RUFY3 AND RUFY4</scope>
    <scope>MUTAGENESIS OF THR-34 AND GLN-75</scope>
</reference>
<feature type="chain" id="PRO_0000232921" description="ADP-ribosylation factor-like protein 8B">
    <location>
        <begin position="1"/>
        <end position="186"/>
    </location>
</feature>
<feature type="intramembrane region" description="Note=Mediates targeting to membranes" evidence="4">
    <location>
        <begin position="1"/>
        <end position="19"/>
    </location>
</feature>
<feature type="binding site" evidence="17">
    <location>
        <begin position="29"/>
        <end position="35"/>
    </location>
    <ligand>
        <name>GTP</name>
        <dbReference type="ChEBI" id="CHEBI:37565"/>
    </ligand>
</feature>
<feature type="binding site" evidence="1">
    <location>
        <begin position="71"/>
        <end position="75"/>
    </location>
    <ligand>
        <name>GTP</name>
        <dbReference type="ChEBI" id="CHEBI:37565"/>
    </ligand>
</feature>
<feature type="binding site" evidence="17">
    <location>
        <begin position="130"/>
        <end position="133"/>
    </location>
    <ligand>
        <name>GTP</name>
        <dbReference type="ChEBI" id="CHEBI:37565"/>
    </ligand>
</feature>
<feature type="modified residue" description="N-acetylmethionine" evidence="4 21 22">
    <location>
        <position position="1"/>
    </location>
</feature>
<feature type="cross-link" description="Glycyl lysine isopeptide (Lys-Gly) (interchain with G-Cter in ubiquitin)" evidence="11">
    <location>
        <position position="141"/>
    </location>
</feature>
<feature type="splice variant" id="VSP_056238" description="In isoform 2." evidence="18">
    <original>VLVLGNKRDLPNALDEKQLIEKMNLSAIQDREICCYSISCKEKDNIDITLQWLIQHSKSRRS</original>
    <variation>ISHFSGLFSIQNLEEAEASPEVFQSFLAIILELLSVPLK</variation>
    <location>
        <begin position="125"/>
        <end position="186"/>
    </location>
</feature>
<feature type="mutagenesis site" description="Diffuse cytoplasmic distribution and loss of localization to lysosomes. No effect on acetylation." evidence="4">
    <original>L</original>
    <variation>A</variation>
    <location>
        <position position="2"/>
    </location>
</feature>
<feature type="mutagenesis site" description="No effect on localization and acetylation." evidence="4">
    <original>L</original>
    <variation>F</variation>
    <location>
        <position position="2"/>
    </location>
</feature>
<feature type="mutagenesis site" description="Diffuse cytoplasmic distribution and loss of localization to lysosomes. No effect on acetylation." evidence="4">
    <original>ISRLLDWF</original>
    <variation>ASRALDWA</variation>
    <location>
        <begin position="5"/>
        <end position="12"/>
    </location>
</feature>
<feature type="mutagenesis site" description="Binds GDP, hence is inactive. Alters chromosome segregation. Decreases interaction with VPS41. Loss of lysosomal location. Loss of interaction with PLEKHM1. Loss of interaction with RUFY3 and RUFY4." evidence="3 5 6 15">
    <original>T</original>
    <variation>N</variation>
    <location>
        <position position="34"/>
    </location>
</feature>
<feature type="mutagenesis site" description="Alters chromosome segregation." evidence="3">
    <location>
        <begin position="49"/>
        <end position="58"/>
    </location>
</feature>
<feature type="mutagenesis site" description="Preferentially binds GTP." evidence="3">
    <original>W</original>
    <variation>R</variation>
    <location>
        <position position="70"/>
    </location>
</feature>
<feature type="mutagenesis site" description="Alters chromosome segregation." evidence="3">
    <location>
        <begin position="74"/>
        <end position="85"/>
    </location>
</feature>
<feature type="mutagenesis site" description="Prevents GTP hydrolysis, hence remains active. No effect on lysosomal location. Alters lysosomes cellular distribution and motility. Increases interaction with VPS41. No effect on interaction with PLEKHM1. Does not affect interaction with RUFY3 and RUFY4." evidence="4 5 6 12 15">
    <original>Q</original>
    <variation>L</variation>
    <location>
        <position position="75"/>
    </location>
</feature>
<feature type="mutagenesis site" description="Loss of GTP/GDP-binding. Affects chromosome segregation." evidence="3">
    <original>N</original>
    <variation>I</variation>
    <location>
        <position position="130"/>
    </location>
</feature>
<feature type="mutagenesis site" description="Abolished ubiquitination by RNF167." evidence="11">
    <original>K</original>
    <variation>R</variation>
    <location>
        <position position="141"/>
    </location>
</feature>
<feature type="strand" evidence="23">
    <location>
        <begin position="19"/>
        <end position="26"/>
    </location>
</feature>
<feature type="helix" evidence="23">
    <location>
        <begin position="33"/>
        <end position="40"/>
    </location>
</feature>
<feature type="strand" evidence="23">
    <location>
        <begin position="55"/>
        <end position="62"/>
    </location>
</feature>
<feature type="strand" evidence="23">
    <location>
        <begin position="65"/>
        <end position="72"/>
    </location>
</feature>
<feature type="helix" evidence="23">
    <location>
        <begin position="76"/>
        <end position="81"/>
    </location>
</feature>
<feature type="helix" evidence="23">
    <location>
        <begin position="82"/>
        <end position="86"/>
    </location>
</feature>
<feature type="strand" evidence="23">
    <location>
        <begin position="90"/>
        <end position="97"/>
    </location>
</feature>
<feature type="helix" evidence="23">
    <location>
        <begin position="101"/>
        <end position="103"/>
    </location>
</feature>
<feature type="helix" evidence="23">
    <location>
        <begin position="104"/>
        <end position="115"/>
    </location>
</feature>
<feature type="helix" evidence="23">
    <location>
        <begin position="118"/>
        <end position="120"/>
    </location>
</feature>
<feature type="strand" evidence="23">
    <location>
        <begin position="125"/>
        <end position="130"/>
    </location>
</feature>
<feature type="helix" evidence="23">
    <location>
        <begin position="140"/>
        <end position="146"/>
    </location>
</feature>
<feature type="helix" evidence="23">
    <location>
        <begin position="149"/>
        <end position="151"/>
    </location>
</feature>
<feature type="strand" evidence="23">
    <location>
        <begin position="157"/>
        <end position="161"/>
    </location>
</feature>
<feature type="turn" evidence="23">
    <location>
        <begin position="164"/>
        <end position="167"/>
    </location>
</feature>
<feature type="helix" evidence="23">
    <location>
        <begin position="170"/>
        <end position="178"/>
    </location>
</feature>
<sequence length="186" mass="21539">MLALISRLLDWFRSLFWKEEMELTLVGLQYSGKTTFVNVIASGQFSEDMIPTVGFNMRKVTKGNVTIKIWDIGGQPRFRSMWERYCRGVNAIVYMIDAADREKIEASRNELHNLLDKPQLQGIPVLVLGNKRDLPNALDEKQLIEKMNLSAIQDREICCYSISCKEKDNIDITLQWLIQHSKSRRS</sequence>
<dbReference type="EC" id="3.6.5.2" evidence="3 4"/>
<dbReference type="EMBL" id="AB118751">
    <property type="protein sequence ID" value="BAD23992.1"/>
    <property type="molecule type" value="mRNA"/>
</dbReference>
<dbReference type="EMBL" id="AK001564">
    <property type="protein sequence ID" value="BAA91759.1"/>
    <property type="molecule type" value="mRNA"/>
</dbReference>
<dbReference type="EMBL" id="AK295465">
    <property type="protein sequence ID" value="BAG58397.1"/>
    <property type="molecule type" value="mRNA"/>
</dbReference>
<dbReference type="EMBL" id="CR457264">
    <property type="protein sequence ID" value="CAG33545.1"/>
    <property type="molecule type" value="mRNA"/>
</dbReference>
<dbReference type="EMBL" id="AC021999">
    <property type="status" value="NOT_ANNOTATED_CDS"/>
    <property type="molecule type" value="Genomic_DNA"/>
</dbReference>
<dbReference type="EMBL" id="AC026202">
    <property type="status" value="NOT_ANNOTATED_CDS"/>
    <property type="molecule type" value="Genomic_DNA"/>
</dbReference>
<dbReference type="EMBL" id="CH471055">
    <property type="protein sequence ID" value="EAW63919.1"/>
    <property type="molecule type" value="Genomic_DNA"/>
</dbReference>
<dbReference type="EMBL" id="BC013131">
    <property type="protein sequence ID" value="AAH13131.1"/>
    <property type="molecule type" value="mRNA"/>
</dbReference>
<dbReference type="EMBL" id="BC063125">
    <property type="protein sequence ID" value="AAH63125.1"/>
    <property type="molecule type" value="mRNA"/>
</dbReference>
<dbReference type="CCDS" id="CCDS2566.1">
    <molecule id="Q9NVJ2-1"/>
</dbReference>
<dbReference type="RefSeq" id="NP_060654.1">
    <molecule id="Q9NVJ2-1"/>
    <property type="nucleotide sequence ID" value="NM_018184.3"/>
</dbReference>
<dbReference type="PDB" id="2AL7">
    <property type="method" value="X-ray"/>
    <property type="resolution" value="1.85 A"/>
    <property type="chains" value="A=18-184"/>
</dbReference>
<dbReference type="PDB" id="8JC5">
    <property type="method" value="X-ray"/>
    <property type="resolution" value="2.01 A"/>
    <property type="chains" value="A/B=18-186"/>
</dbReference>
<dbReference type="PDB" id="8JCA">
    <property type="method" value="X-ray"/>
    <property type="resolution" value="1.65 A"/>
    <property type="chains" value="A=18-186"/>
</dbReference>
<dbReference type="PDBsum" id="2AL7"/>
<dbReference type="PDBsum" id="8JC5"/>
<dbReference type="PDBsum" id="8JCA"/>
<dbReference type="SMR" id="Q9NVJ2"/>
<dbReference type="BioGRID" id="120503">
    <property type="interactions" value="272"/>
</dbReference>
<dbReference type="FunCoup" id="Q9NVJ2">
    <property type="interactions" value="3019"/>
</dbReference>
<dbReference type="IntAct" id="Q9NVJ2">
    <property type="interactions" value="112"/>
</dbReference>
<dbReference type="MINT" id="Q9NVJ2"/>
<dbReference type="STRING" id="9606.ENSP00000479202"/>
<dbReference type="ChEMBL" id="CHEMBL4295962"/>
<dbReference type="GlyGen" id="Q9NVJ2">
    <property type="glycosylation" value="1 site, 1 O-linked glycan (1 site)"/>
</dbReference>
<dbReference type="iPTMnet" id="Q9NVJ2"/>
<dbReference type="PhosphoSitePlus" id="Q9NVJ2"/>
<dbReference type="SwissPalm" id="Q9NVJ2"/>
<dbReference type="BioMuta" id="ARL8B"/>
<dbReference type="DMDM" id="74752996"/>
<dbReference type="jPOST" id="Q9NVJ2"/>
<dbReference type="MassIVE" id="Q9NVJ2"/>
<dbReference type="PaxDb" id="9606-ENSP00000256496"/>
<dbReference type="PeptideAtlas" id="Q9NVJ2"/>
<dbReference type="ProteomicsDB" id="4283"/>
<dbReference type="ProteomicsDB" id="82817">
    <molecule id="Q9NVJ2-1"/>
</dbReference>
<dbReference type="Pumba" id="Q9NVJ2"/>
<dbReference type="TopDownProteomics" id="Q9NVJ2-1">
    <molecule id="Q9NVJ2-1"/>
</dbReference>
<dbReference type="Antibodypedia" id="25235">
    <property type="antibodies" value="157 antibodies from 24 providers"/>
</dbReference>
<dbReference type="DNASU" id="55207"/>
<dbReference type="Ensembl" id="ENST00000256496.8">
    <molecule id="Q9NVJ2-1"/>
    <property type="protein sequence ID" value="ENSP00000256496.3"/>
    <property type="gene ID" value="ENSG00000134108.14"/>
</dbReference>
<dbReference type="Ensembl" id="ENST00000419534.2">
    <molecule id="Q9NVJ2-2"/>
    <property type="protein sequence ID" value="ENSP00000402996.2"/>
    <property type="gene ID" value="ENSG00000134108.14"/>
</dbReference>
<dbReference type="GeneID" id="55207"/>
<dbReference type="KEGG" id="hsa:55207"/>
<dbReference type="MANE-Select" id="ENST00000256496.8">
    <property type="protein sequence ID" value="ENSP00000256496.3"/>
    <property type="RefSeq nucleotide sequence ID" value="NM_018184.3"/>
    <property type="RefSeq protein sequence ID" value="NP_060654.1"/>
</dbReference>
<dbReference type="UCSC" id="uc003bqg.4">
    <molecule id="Q9NVJ2-1"/>
    <property type="organism name" value="human"/>
</dbReference>
<dbReference type="AGR" id="HGNC:25564"/>
<dbReference type="CTD" id="55207"/>
<dbReference type="DisGeNET" id="55207"/>
<dbReference type="GeneCards" id="ARL8B"/>
<dbReference type="HGNC" id="HGNC:25564">
    <property type="gene designation" value="ARL8B"/>
</dbReference>
<dbReference type="HPA" id="ENSG00000134108">
    <property type="expression patterns" value="Low tissue specificity"/>
</dbReference>
<dbReference type="MIM" id="616596">
    <property type="type" value="gene"/>
</dbReference>
<dbReference type="neXtProt" id="NX_Q9NVJ2"/>
<dbReference type="OpenTargets" id="ENSG00000134108"/>
<dbReference type="PharmGKB" id="PA134959531"/>
<dbReference type="VEuPathDB" id="HostDB:ENSG00000134108"/>
<dbReference type="eggNOG" id="KOG0075">
    <property type="taxonomic scope" value="Eukaryota"/>
</dbReference>
<dbReference type="GeneTree" id="ENSGT00940000154861"/>
<dbReference type="HOGENOM" id="CLU_040729_10_0_1"/>
<dbReference type="InParanoid" id="Q9NVJ2"/>
<dbReference type="OMA" id="FRNMWER"/>
<dbReference type="OrthoDB" id="2011769at2759"/>
<dbReference type="PAN-GO" id="Q9NVJ2">
    <property type="GO annotations" value="2 GO annotations based on evolutionary models"/>
</dbReference>
<dbReference type="PhylomeDB" id="Q9NVJ2"/>
<dbReference type="TreeFam" id="TF105470"/>
<dbReference type="PathwayCommons" id="Q9NVJ2"/>
<dbReference type="SignaLink" id="Q9NVJ2"/>
<dbReference type="BioGRID-ORCS" id="55207">
    <property type="hits" value="44 hits in 1157 CRISPR screens"/>
</dbReference>
<dbReference type="CD-CODE" id="91857CE7">
    <property type="entry name" value="Nucleolus"/>
</dbReference>
<dbReference type="ChiTaRS" id="ARL8B">
    <property type="organism name" value="human"/>
</dbReference>
<dbReference type="EvolutionaryTrace" id="Q9NVJ2"/>
<dbReference type="GeneWiki" id="ARL8B"/>
<dbReference type="GenomeRNAi" id="55207"/>
<dbReference type="Pharos" id="Q9NVJ2">
    <property type="development level" value="Tbio"/>
</dbReference>
<dbReference type="PRO" id="PR:Q9NVJ2"/>
<dbReference type="Proteomes" id="UP000005640">
    <property type="component" value="Chromosome 3"/>
</dbReference>
<dbReference type="RNAct" id="Q9NVJ2">
    <property type="molecule type" value="protein"/>
</dbReference>
<dbReference type="Bgee" id="ENSG00000134108">
    <property type="expression patterns" value="Expressed in middle temporal gyrus and 209 other cell types or tissues"/>
</dbReference>
<dbReference type="ExpressionAtlas" id="Q9NVJ2">
    <property type="expression patterns" value="baseline and differential"/>
</dbReference>
<dbReference type="GO" id="GO:1904115">
    <property type="term" value="C:axon cytoplasm"/>
    <property type="evidence" value="ECO:0007669"/>
    <property type="project" value="GOC"/>
</dbReference>
<dbReference type="GO" id="GO:0101004">
    <property type="term" value="C:cytolytic granule membrane"/>
    <property type="evidence" value="ECO:0000314"/>
    <property type="project" value="UniProtKB"/>
</dbReference>
<dbReference type="GO" id="GO:0005737">
    <property type="term" value="C:cytoplasm"/>
    <property type="evidence" value="ECO:0000314"/>
    <property type="project" value="UniProtKB"/>
</dbReference>
<dbReference type="GO" id="GO:0005829">
    <property type="term" value="C:cytosol"/>
    <property type="evidence" value="ECO:0007669"/>
    <property type="project" value="GOC"/>
</dbReference>
<dbReference type="GO" id="GO:0031901">
    <property type="term" value="C:early endosome membrane"/>
    <property type="evidence" value="ECO:0000314"/>
    <property type="project" value="UniProt"/>
</dbReference>
<dbReference type="GO" id="GO:0070062">
    <property type="term" value="C:extracellular exosome"/>
    <property type="evidence" value="ECO:0007005"/>
    <property type="project" value="UniProtKB"/>
</dbReference>
<dbReference type="GO" id="GO:0031902">
    <property type="term" value="C:late endosome membrane"/>
    <property type="evidence" value="ECO:0007669"/>
    <property type="project" value="UniProtKB-SubCell"/>
</dbReference>
<dbReference type="GO" id="GO:0005765">
    <property type="term" value="C:lysosomal membrane"/>
    <property type="evidence" value="ECO:0000314"/>
    <property type="project" value="UniProtKB"/>
</dbReference>
<dbReference type="GO" id="GO:0005764">
    <property type="term" value="C:lysosome"/>
    <property type="evidence" value="ECO:0000314"/>
    <property type="project" value="UniProtKB"/>
</dbReference>
<dbReference type="GO" id="GO:0016020">
    <property type="term" value="C:membrane"/>
    <property type="evidence" value="ECO:0007005"/>
    <property type="project" value="UniProtKB"/>
</dbReference>
<dbReference type="GO" id="GO:0030496">
    <property type="term" value="C:midbody"/>
    <property type="evidence" value="ECO:0000314"/>
    <property type="project" value="UniProtKB"/>
</dbReference>
<dbReference type="GO" id="GO:0051233">
    <property type="term" value="C:spindle midzone"/>
    <property type="evidence" value="ECO:0000314"/>
    <property type="project" value="UniProtKB"/>
</dbReference>
<dbReference type="GO" id="GO:0045202">
    <property type="term" value="C:synapse"/>
    <property type="evidence" value="ECO:0007669"/>
    <property type="project" value="UniProtKB-SubCell"/>
</dbReference>
<dbReference type="GO" id="GO:0043014">
    <property type="term" value="F:alpha-tubulin binding"/>
    <property type="evidence" value="ECO:0000314"/>
    <property type="project" value="UniProtKB"/>
</dbReference>
<dbReference type="GO" id="GO:0048487">
    <property type="term" value="F:beta-tubulin binding"/>
    <property type="evidence" value="ECO:0000314"/>
    <property type="project" value="UniProtKB"/>
</dbReference>
<dbReference type="GO" id="GO:0003925">
    <property type="term" value="F:G protein activity"/>
    <property type="evidence" value="ECO:0000314"/>
    <property type="project" value="UniProt"/>
</dbReference>
<dbReference type="GO" id="GO:0019003">
    <property type="term" value="F:GDP binding"/>
    <property type="evidence" value="ECO:0000314"/>
    <property type="project" value="UniProtKB"/>
</dbReference>
<dbReference type="GO" id="GO:0005525">
    <property type="term" value="F:GTP binding"/>
    <property type="evidence" value="ECO:0000314"/>
    <property type="project" value="UniProtKB"/>
</dbReference>
<dbReference type="GO" id="GO:0003924">
    <property type="term" value="F:GTPase activity"/>
    <property type="evidence" value="ECO:0000314"/>
    <property type="project" value="UniProt"/>
</dbReference>
<dbReference type="GO" id="GO:0008089">
    <property type="term" value="P:anterograde axonal transport"/>
    <property type="evidence" value="ECO:0000318"/>
    <property type="project" value="GO_Central"/>
</dbReference>
<dbReference type="GO" id="GO:0002747">
    <property type="term" value="P:antigen processing and presentation following phagocytosis"/>
    <property type="evidence" value="ECO:0000315"/>
    <property type="project" value="UniProtKB"/>
</dbReference>
<dbReference type="GO" id="GO:0002505">
    <property type="term" value="P:antigen processing and presentation of polysaccharide antigen via MHC class II"/>
    <property type="evidence" value="ECO:0000250"/>
    <property type="project" value="UniProtKB"/>
</dbReference>
<dbReference type="GO" id="GO:0061909">
    <property type="term" value="P:autophagosome-lysosome fusion"/>
    <property type="evidence" value="ECO:0000315"/>
    <property type="project" value="UniProtKB"/>
</dbReference>
<dbReference type="GO" id="GO:1990927">
    <property type="term" value="P:calcium ion regulated lysosome exocytosis"/>
    <property type="evidence" value="ECO:0000315"/>
    <property type="project" value="UniProtKB"/>
</dbReference>
<dbReference type="GO" id="GO:0051301">
    <property type="term" value="P:cell division"/>
    <property type="evidence" value="ECO:0007669"/>
    <property type="project" value="UniProtKB-KW"/>
</dbReference>
<dbReference type="GO" id="GO:0007059">
    <property type="term" value="P:chromosome segregation"/>
    <property type="evidence" value="ECO:0000315"/>
    <property type="project" value="UniProtKB"/>
</dbReference>
<dbReference type="GO" id="GO:0034498">
    <property type="term" value="P:early endosome to Golgi transport"/>
    <property type="evidence" value="ECO:0000314"/>
    <property type="project" value="UniProt"/>
</dbReference>
<dbReference type="GO" id="GO:0090117">
    <property type="term" value="P:endosome to lysosome transport of low-density lipoprotein particle"/>
    <property type="evidence" value="ECO:0000315"/>
    <property type="project" value="UniProtKB"/>
</dbReference>
<dbReference type="GO" id="GO:1902774">
    <property type="term" value="P:late endosome to lysosome transport"/>
    <property type="evidence" value="ECO:0000315"/>
    <property type="project" value="UniProtKB"/>
</dbReference>
<dbReference type="GO" id="GO:0032418">
    <property type="term" value="P:lysosome localization"/>
    <property type="evidence" value="ECO:0000314"/>
    <property type="project" value="UniProtKB"/>
</dbReference>
<dbReference type="GO" id="GO:0042267">
    <property type="term" value="P:natural killer cell mediated cytotoxicity"/>
    <property type="evidence" value="ECO:0000315"/>
    <property type="project" value="UniProtKB"/>
</dbReference>
<dbReference type="GO" id="GO:0090385">
    <property type="term" value="P:phagosome-lysosome fusion"/>
    <property type="evidence" value="ECO:0000315"/>
    <property type="project" value="UniProtKB"/>
</dbReference>
<dbReference type="GO" id="GO:0001778">
    <property type="term" value="P:plasma membrane repair"/>
    <property type="evidence" value="ECO:0000315"/>
    <property type="project" value="UniProtKB"/>
</dbReference>
<dbReference type="GO" id="GO:1902946">
    <property type="term" value="P:protein localization to early endosome"/>
    <property type="evidence" value="ECO:0000314"/>
    <property type="project" value="UniProt"/>
</dbReference>
<dbReference type="GO" id="GO:0015031">
    <property type="term" value="P:protein transport"/>
    <property type="evidence" value="ECO:0007669"/>
    <property type="project" value="UniProtKB-KW"/>
</dbReference>
<dbReference type="GO" id="GO:0046754">
    <property type="term" value="P:viral exocytosis"/>
    <property type="evidence" value="ECO:0000315"/>
    <property type="project" value="UniProtKB"/>
</dbReference>
<dbReference type="CDD" id="cd04159">
    <property type="entry name" value="Arl10_like"/>
    <property type="match status" value="1"/>
</dbReference>
<dbReference type="FunFam" id="3.40.50.300:FF:000247">
    <property type="entry name" value="ADP-ribosylation factor-like GTPase 8A"/>
    <property type="match status" value="1"/>
</dbReference>
<dbReference type="Gene3D" id="3.40.50.300">
    <property type="entry name" value="P-loop containing nucleotide triphosphate hydrolases"/>
    <property type="match status" value="1"/>
</dbReference>
<dbReference type="InterPro" id="IPR044154">
    <property type="entry name" value="Arl8a/8b"/>
</dbReference>
<dbReference type="InterPro" id="IPR027417">
    <property type="entry name" value="P-loop_NTPase"/>
</dbReference>
<dbReference type="InterPro" id="IPR005225">
    <property type="entry name" value="Small_GTP-bd"/>
</dbReference>
<dbReference type="InterPro" id="IPR006689">
    <property type="entry name" value="Small_GTPase_ARF/SAR"/>
</dbReference>
<dbReference type="NCBIfam" id="TIGR00231">
    <property type="entry name" value="small_GTP"/>
    <property type="match status" value="1"/>
</dbReference>
<dbReference type="PANTHER" id="PTHR45732">
    <property type="entry name" value="ADP-RIBOSYLATION FACTOR-LIKE PROTEIN 8"/>
    <property type="match status" value="1"/>
</dbReference>
<dbReference type="PANTHER" id="PTHR45732:SF13">
    <property type="entry name" value="ADP-RIBOSYLATION FACTOR-LIKE PROTEIN 8B"/>
    <property type="match status" value="1"/>
</dbReference>
<dbReference type="Pfam" id="PF00025">
    <property type="entry name" value="Arf"/>
    <property type="match status" value="1"/>
</dbReference>
<dbReference type="PRINTS" id="PR00328">
    <property type="entry name" value="SAR1GTPBP"/>
</dbReference>
<dbReference type="SMART" id="SM00177">
    <property type="entry name" value="ARF"/>
    <property type="match status" value="1"/>
</dbReference>
<dbReference type="SMART" id="SM00175">
    <property type="entry name" value="RAB"/>
    <property type="match status" value="1"/>
</dbReference>
<dbReference type="SMART" id="SM00173">
    <property type="entry name" value="RAS"/>
    <property type="match status" value="1"/>
</dbReference>
<dbReference type="SMART" id="SM00178">
    <property type="entry name" value="SAR"/>
    <property type="match status" value="1"/>
</dbReference>
<dbReference type="SUPFAM" id="SSF52540">
    <property type="entry name" value="P-loop containing nucleoside triphosphate hydrolases"/>
    <property type="match status" value="1"/>
</dbReference>
<dbReference type="PROSITE" id="PS51417">
    <property type="entry name" value="ARF"/>
    <property type="match status" value="1"/>
</dbReference>